<proteinExistence type="inferred from homology"/>
<dbReference type="EMBL" id="CP000141">
    <property type="protein sequence ID" value="ABB14579.1"/>
    <property type="molecule type" value="Genomic_DNA"/>
</dbReference>
<dbReference type="SMR" id="Q3AE25"/>
<dbReference type="STRING" id="246194.CHY_0755"/>
<dbReference type="KEGG" id="chy:CHY_0755"/>
<dbReference type="eggNOG" id="COG0310">
    <property type="taxonomic scope" value="Bacteria"/>
</dbReference>
<dbReference type="HOGENOM" id="CLU_052508_3_0_9"/>
<dbReference type="InParanoid" id="Q3AE25"/>
<dbReference type="UniPathway" id="UPA00148"/>
<dbReference type="Proteomes" id="UP000002706">
    <property type="component" value="Chromosome"/>
</dbReference>
<dbReference type="GO" id="GO:0043190">
    <property type="term" value="C:ATP-binding cassette (ABC) transporter complex"/>
    <property type="evidence" value="ECO:0007669"/>
    <property type="project" value="InterPro"/>
</dbReference>
<dbReference type="GO" id="GO:0015087">
    <property type="term" value="F:cobalt ion transmembrane transporter activity"/>
    <property type="evidence" value="ECO:0007669"/>
    <property type="project" value="UniProtKB-UniRule"/>
</dbReference>
<dbReference type="GO" id="GO:0009236">
    <property type="term" value="P:cobalamin biosynthetic process"/>
    <property type="evidence" value="ECO:0007669"/>
    <property type="project" value="UniProtKB-UniRule"/>
</dbReference>
<dbReference type="FunFam" id="1.10.1760.20:FF:000001">
    <property type="entry name" value="Cobalt transport protein CbiM"/>
    <property type="match status" value="1"/>
</dbReference>
<dbReference type="Gene3D" id="1.10.1760.20">
    <property type="match status" value="1"/>
</dbReference>
<dbReference type="HAMAP" id="MF_01462">
    <property type="entry name" value="CbiM"/>
    <property type="match status" value="1"/>
</dbReference>
<dbReference type="InterPro" id="IPR018024">
    <property type="entry name" value="CbiM"/>
</dbReference>
<dbReference type="InterPro" id="IPR002751">
    <property type="entry name" value="CbiM/NikMN"/>
</dbReference>
<dbReference type="NCBIfam" id="TIGR00123">
    <property type="entry name" value="cbiM"/>
    <property type="match status" value="1"/>
</dbReference>
<dbReference type="NCBIfam" id="NF006184">
    <property type="entry name" value="PRK08319.1"/>
    <property type="match status" value="1"/>
</dbReference>
<dbReference type="PANTHER" id="PTHR43627">
    <property type="match status" value="1"/>
</dbReference>
<dbReference type="PANTHER" id="PTHR43627:SF1">
    <property type="entry name" value="COBALT TRANSPORT PROTEIN CBIM"/>
    <property type="match status" value="1"/>
</dbReference>
<dbReference type="Pfam" id="PF01891">
    <property type="entry name" value="CbiM"/>
    <property type="match status" value="1"/>
</dbReference>
<evidence type="ECO:0000255" key="1">
    <source>
        <dbReference type="HAMAP-Rule" id="MF_01462"/>
    </source>
</evidence>
<comment type="function">
    <text evidence="1">Part of the energy-coupling factor (ECF) transporter complex CbiMNOQ involved in cobalt import.</text>
</comment>
<comment type="pathway">
    <text evidence="1">Cofactor biosynthesis; adenosylcobalamin biosynthesis.</text>
</comment>
<comment type="subunit">
    <text evidence="1">Forms an energy-coupling factor (ECF) transporter complex composed of an ATP-binding protein (A component, CbiO), a transmembrane protein (T component, CbiQ) and 2 possible substrate-capture proteins (S components, CbiM and CbiN) of unknown stoichimetry.</text>
</comment>
<comment type="subcellular location">
    <subcellularLocation>
        <location evidence="1">Cell membrane</location>
        <topology evidence="1">Multi-pass membrane protein</topology>
    </subcellularLocation>
</comment>
<comment type="similarity">
    <text evidence="1">Belongs to the CbiM family.</text>
</comment>
<feature type="signal peptide" evidence="1">
    <location>
        <begin position="1"/>
        <end position="27"/>
    </location>
</feature>
<feature type="chain" id="PRO_0000411137" description="Cobalt transport protein CbiM">
    <location>
        <begin position="28"/>
        <end position="244"/>
    </location>
</feature>
<feature type="transmembrane region" description="Helical" evidence="1">
    <location>
        <begin position="36"/>
        <end position="56"/>
    </location>
</feature>
<feature type="transmembrane region" description="Helical" evidence="1">
    <location>
        <begin position="65"/>
        <end position="85"/>
    </location>
</feature>
<feature type="transmembrane region" description="Helical" evidence="1">
    <location>
        <begin position="102"/>
        <end position="122"/>
    </location>
</feature>
<feature type="transmembrane region" description="Helical" evidence="1">
    <location>
        <begin position="134"/>
        <end position="154"/>
    </location>
</feature>
<feature type="transmembrane region" description="Helical" evidence="1">
    <location>
        <begin position="168"/>
        <end position="188"/>
    </location>
</feature>
<feature type="transmembrane region" description="Helical" evidence="1">
    <location>
        <begin position="196"/>
        <end position="216"/>
    </location>
</feature>
<protein>
    <recommendedName>
        <fullName evidence="1">Cobalt transport protein CbiM</fullName>
    </recommendedName>
    <alternativeName>
        <fullName evidence="1">Energy-coupling factor transporter probable substrate-capture protein CbiM</fullName>
        <shortName evidence="1">ECF transporter S component CbiM</shortName>
    </alternativeName>
</protein>
<keyword id="KW-1003">Cell membrane</keyword>
<keyword id="KW-0169">Cobalamin biosynthesis</keyword>
<keyword id="KW-0170">Cobalt</keyword>
<keyword id="KW-0171">Cobalt transport</keyword>
<keyword id="KW-0406">Ion transport</keyword>
<keyword id="KW-0472">Membrane</keyword>
<keyword id="KW-1185">Reference proteome</keyword>
<keyword id="KW-0732">Signal</keyword>
<keyword id="KW-0812">Transmembrane</keyword>
<keyword id="KW-1133">Transmembrane helix</keyword>
<keyword id="KW-0813">Transport</keyword>
<gene>
    <name evidence="1" type="primary">cbiM</name>
    <name type="ordered locus">CHY_0755</name>
</gene>
<accession>Q3AE25</accession>
<sequence length="244" mass="26359">MVEGMLKTNFRLLFLLIFLLIPTPVLAMHIMEGFLPVKWVIFWDLVTLPFIMVGFIRLQREATQGPGAKLMLAFAGAFIFVLSALKMPSVTGSCSHPTGTGLAAILFGPFITTVLGFIVLIFQALLLAHGGLTTLGANTFSMAVAGPLVAYGVYKGLQKAGINSNFSIFLAAMLGDLVTYIVTSVQLALAFPGSSLFLSALKFMGIFALTQIPLAISEGILTVLTYNFLSRYEDAKIWVEKGEH</sequence>
<reference key="1">
    <citation type="journal article" date="2005" name="PLoS Genet.">
        <title>Life in hot carbon monoxide: the complete genome sequence of Carboxydothermus hydrogenoformans Z-2901.</title>
        <authorList>
            <person name="Wu M."/>
            <person name="Ren Q."/>
            <person name="Durkin A.S."/>
            <person name="Daugherty S.C."/>
            <person name="Brinkac L.M."/>
            <person name="Dodson R.J."/>
            <person name="Madupu R."/>
            <person name="Sullivan S.A."/>
            <person name="Kolonay J.F."/>
            <person name="Nelson W.C."/>
            <person name="Tallon L.J."/>
            <person name="Jones K.M."/>
            <person name="Ulrich L.E."/>
            <person name="Gonzalez J.M."/>
            <person name="Zhulin I.B."/>
            <person name="Robb F.T."/>
            <person name="Eisen J.A."/>
        </authorList>
    </citation>
    <scope>NUCLEOTIDE SEQUENCE [LARGE SCALE GENOMIC DNA]</scope>
    <source>
        <strain>ATCC BAA-161 / DSM 6008 / Z-2901</strain>
    </source>
</reference>
<name>CBIM_CARHZ</name>
<organism>
    <name type="scientific">Carboxydothermus hydrogenoformans (strain ATCC BAA-161 / DSM 6008 / Z-2901)</name>
    <dbReference type="NCBI Taxonomy" id="246194"/>
    <lineage>
        <taxon>Bacteria</taxon>
        <taxon>Bacillati</taxon>
        <taxon>Bacillota</taxon>
        <taxon>Clostridia</taxon>
        <taxon>Thermoanaerobacterales</taxon>
        <taxon>Thermoanaerobacteraceae</taxon>
        <taxon>Carboxydothermus</taxon>
    </lineage>
</organism>